<sequence>MDEDSPAPSLQNIIDQDSLRWIFVGGKGGVGKTTTSCSLAIQLAKNRESVLLISTDPAHNLSDAFGQKFGKDARPVNGIDNLHCMEIDPSGSIQEMIEQAQSAGGAGAGMTNMMQDIAFSIPGVDEAMSFAEVLKQVKSTSYSVIIFDTAPTGHTLRFLTFPTVLEKALGKISELSGRFGPMLGSLMGGQGGPSADDMFAKLNETRATISEVNTQFKNPDLTTFVCVCIPEFLSLYETERMVQDLTSFDIDTHNIVVNQLLYPKKGDDCELCSSRYKMQQKYLEQILDLYEDFHIVRLPQQTQEVRGVQALEKFSNLLVHPYQHIEN</sequence>
<gene>
    <name evidence="1" type="primary">GET3</name>
    <name type="ordered locus">YALI0E33495g</name>
</gene>
<name>GET3_YARLI</name>
<feature type="chain" id="PRO_0000388237" description="ATPase GET3">
    <location>
        <begin position="1"/>
        <end position="327"/>
    </location>
</feature>
<feature type="active site" evidence="1">
    <location>
        <position position="56"/>
    </location>
</feature>
<feature type="binding site" evidence="1">
    <location>
        <begin position="27"/>
        <end position="34"/>
    </location>
    <ligand>
        <name>ATP</name>
        <dbReference type="ChEBI" id="CHEBI:30616"/>
    </ligand>
</feature>
<feature type="binding site" evidence="1">
    <location>
        <position position="231"/>
    </location>
    <ligand>
        <name>ATP</name>
        <dbReference type="ChEBI" id="CHEBI:30616"/>
    </ligand>
</feature>
<feature type="binding site" evidence="1">
    <location>
        <position position="258"/>
    </location>
    <ligand>
        <name>ATP</name>
        <dbReference type="ChEBI" id="CHEBI:30616"/>
    </ligand>
</feature>
<feature type="binding site" evidence="1">
    <location>
        <position position="269"/>
    </location>
    <ligand>
        <name>Zn(2+)</name>
        <dbReference type="ChEBI" id="CHEBI:29105"/>
        <note>ligand shared between dimeric partners</note>
    </ligand>
</feature>
<feature type="binding site" evidence="1">
    <location>
        <position position="272"/>
    </location>
    <ligand>
        <name>Zn(2+)</name>
        <dbReference type="ChEBI" id="CHEBI:29105"/>
        <note>ligand shared between dimeric partners</note>
    </ligand>
</feature>
<reference key="1">
    <citation type="journal article" date="2004" name="Nature">
        <title>Genome evolution in yeasts.</title>
        <authorList>
            <person name="Dujon B."/>
            <person name="Sherman D."/>
            <person name="Fischer G."/>
            <person name="Durrens P."/>
            <person name="Casaregola S."/>
            <person name="Lafontaine I."/>
            <person name="de Montigny J."/>
            <person name="Marck C."/>
            <person name="Neuveglise C."/>
            <person name="Talla E."/>
            <person name="Goffard N."/>
            <person name="Frangeul L."/>
            <person name="Aigle M."/>
            <person name="Anthouard V."/>
            <person name="Babour A."/>
            <person name="Barbe V."/>
            <person name="Barnay S."/>
            <person name="Blanchin S."/>
            <person name="Beckerich J.-M."/>
            <person name="Beyne E."/>
            <person name="Bleykasten C."/>
            <person name="Boisrame A."/>
            <person name="Boyer J."/>
            <person name="Cattolico L."/>
            <person name="Confanioleri F."/>
            <person name="de Daruvar A."/>
            <person name="Despons L."/>
            <person name="Fabre E."/>
            <person name="Fairhead C."/>
            <person name="Ferry-Dumazet H."/>
            <person name="Groppi A."/>
            <person name="Hantraye F."/>
            <person name="Hennequin C."/>
            <person name="Jauniaux N."/>
            <person name="Joyet P."/>
            <person name="Kachouri R."/>
            <person name="Kerrest A."/>
            <person name="Koszul R."/>
            <person name="Lemaire M."/>
            <person name="Lesur I."/>
            <person name="Ma L."/>
            <person name="Muller H."/>
            <person name="Nicaud J.-M."/>
            <person name="Nikolski M."/>
            <person name="Oztas S."/>
            <person name="Ozier-Kalogeropoulos O."/>
            <person name="Pellenz S."/>
            <person name="Potier S."/>
            <person name="Richard G.-F."/>
            <person name="Straub M.-L."/>
            <person name="Suleau A."/>
            <person name="Swennen D."/>
            <person name="Tekaia F."/>
            <person name="Wesolowski-Louvel M."/>
            <person name="Westhof E."/>
            <person name="Wirth B."/>
            <person name="Zeniou-Meyer M."/>
            <person name="Zivanovic Y."/>
            <person name="Bolotin-Fukuhara M."/>
            <person name="Thierry A."/>
            <person name="Bouchier C."/>
            <person name="Caudron B."/>
            <person name="Scarpelli C."/>
            <person name="Gaillardin C."/>
            <person name="Weissenbach J."/>
            <person name="Wincker P."/>
            <person name="Souciet J.-L."/>
        </authorList>
    </citation>
    <scope>NUCLEOTIDE SEQUENCE [LARGE SCALE GENOMIC DNA]</scope>
    <source>
        <strain>CLIB 122 / E 150</strain>
    </source>
</reference>
<evidence type="ECO:0000255" key="1">
    <source>
        <dbReference type="HAMAP-Rule" id="MF_03112"/>
    </source>
</evidence>
<dbReference type="EC" id="3.6.-.-" evidence="1"/>
<dbReference type="EMBL" id="CR382131">
    <property type="protein sequence ID" value="CAG80337.1"/>
    <property type="molecule type" value="Genomic_DNA"/>
</dbReference>
<dbReference type="RefSeq" id="XP_504733.1">
    <property type="nucleotide sequence ID" value="XM_504733.1"/>
</dbReference>
<dbReference type="SMR" id="Q6C3M9"/>
<dbReference type="FunCoup" id="Q6C3M9">
    <property type="interactions" value="1001"/>
</dbReference>
<dbReference type="STRING" id="284591.Q6C3M9"/>
<dbReference type="EnsemblFungi" id="CAG80337">
    <property type="protein sequence ID" value="CAG80337"/>
    <property type="gene ID" value="YALI0_E33495g"/>
</dbReference>
<dbReference type="KEGG" id="yli:2912854"/>
<dbReference type="VEuPathDB" id="FungiDB:YALI0_E33495g"/>
<dbReference type="HOGENOM" id="CLU_040761_0_0_1"/>
<dbReference type="InParanoid" id="Q6C3M9"/>
<dbReference type="OMA" id="MDAPYEF"/>
<dbReference type="OrthoDB" id="81864at4891"/>
<dbReference type="Proteomes" id="UP000001300">
    <property type="component" value="Chromosome E"/>
</dbReference>
<dbReference type="GO" id="GO:0043529">
    <property type="term" value="C:GET complex"/>
    <property type="evidence" value="ECO:0000318"/>
    <property type="project" value="GO_Central"/>
</dbReference>
<dbReference type="GO" id="GO:0005794">
    <property type="term" value="C:Golgi apparatus"/>
    <property type="evidence" value="ECO:0007669"/>
    <property type="project" value="UniProtKB-SubCell"/>
</dbReference>
<dbReference type="GO" id="GO:0005524">
    <property type="term" value="F:ATP binding"/>
    <property type="evidence" value="ECO:0007669"/>
    <property type="project" value="UniProtKB-UniRule"/>
</dbReference>
<dbReference type="GO" id="GO:0016887">
    <property type="term" value="F:ATP hydrolysis activity"/>
    <property type="evidence" value="ECO:0000318"/>
    <property type="project" value="GO_Central"/>
</dbReference>
<dbReference type="GO" id="GO:0046872">
    <property type="term" value="F:metal ion binding"/>
    <property type="evidence" value="ECO:0007669"/>
    <property type="project" value="UniProtKB-KW"/>
</dbReference>
<dbReference type="GO" id="GO:0071816">
    <property type="term" value="P:tail-anchored membrane protein insertion into ER membrane"/>
    <property type="evidence" value="ECO:0000318"/>
    <property type="project" value="GO_Central"/>
</dbReference>
<dbReference type="CDD" id="cd02035">
    <property type="entry name" value="ArsA"/>
    <property type="match status" value="1"/>
</dbReference>
<dbReference type="FunFam" id="3.40.50.300:FF:000235">
    <property type="entry name" value="ATPase ASNA1"/>
    <property type="match status" value="1"/>
</dbReference>
<dbReference type="Gene3D" id="3.40.50.300">
    <property type="entry name" value="P-loop containing nucleotide triphosphate hydrolases"/>
    <property type="match status" value="1"/>
</dbReference>
<dbReference type="HAMAP" id="MF_03112">
    <property type="entry name" value="Asna1_Get3"/>
    <property type="match status" value="1"/>
</dbReference>
<dbReference type="InterPro" id="IPR025723">
    <property type="entry name" value="Anion-transp_ATPase-like_dom"/>
</dbReference>
<dbReference type="InterPro" id="IPR016300">
    <property type="entry name" value="ATPase_ArsA/GET3"/>
</dbReference>
<dbReference type="InterPro" id="IPR027542">
    <property type="entry name" value="ATPase_ArsA/GET3_euk"/>
</dbReference>
<dbReference type="InterPro" id="IPR027417">
    <property type="entry name" value="P-loop_NTPase"/>
</dbReference>
<dbReference type="NCBIfam" id="TIGR00345">
    <property type="entry name" value="GET3_arsA_TRC40"/>
    <property type="match status" value="1"/>
</dbReference>
<dbReference type="PANTHER" id="PTHR10803">
    <property type="entry name" value="ARSENICAL PUMP-DRIVING ATPASE ARSENITE-TRANSLOCATING ATPASE"/>
    <property type="match status" value="1"/>
</dbReference>
<dbReference type="PANTHER" id="PTHR10803:SF3">
    <property type="entry name" value="ATPASE GET3"/>
    <property type="match status" value="1"/>
</dbReference>
<dbReference type="Pfam" id="PF02374">
    <property type="entry name" value="ArsA_ATPase"/>
    <property type="match status" value="1"/>
</dbReference>
<dbReference type="SUPFAM" id="SSF52540">
    <property type="entry name" value="P-loop containing nucleoside triphosphate hydrolases"/>
    <property type="match status" value="1"/>
</dbReference>
<protein>
    <recommendedName>
        <fullName evidence="1">ATPase GET3</fullName>
        <ecNumber evidence="1">3.6.-.-</ecNumber>
    </recommendedName>
    <alternativeName>
        <fullName evidence="1">Arsenical pump-driving ATPase</fullName>
    </alternativeName>
    <alternativeName>
        <fullName evidence="1">Arsenite-stimulated ATPase</fullName>
    </alternativeName>
    <alternativeName>
        <fullName evidence="1">Golgi to ER traffic protein 3</fullName>
    </alternativeName>
    <alternativeName>
        <fullName evidence="1">Guided entry of tail-anchored proteins 3</fullName>
    </alternativeName>
</protein>
<comment type="function">
    <text evidence="1">ATPase required for the post-translational delivery of tail-anchored (TA) proteins to the endoplasmic reticulum. Recognizes and selectively binds the transmembrane domain of TA proteins in the cytosol. This complex then targets to the endoplasmic reticulum by membrane-bound receptors GET1 and GET2, where the tail-anchored protein is released for insertion. This process is regulated by ATP binding and hydrolysis. ATP binding drives the homodimer towards the closed dimer state, facilitating recognition of newly synthesized TA membrane proteins. ATP hydrolysis is required for insertion. Subsequently, the homodimer reverts towards the open dimer state, lowering its affinity for the GET1-GET2 receptor, and returning it to the cytosol to initiate a new round of targeting. Cooperates with the HDEL receptor ERD2 to mediate the ATP-dependent retrieval of resident ER proteins that contain a C-terminal H-D-E-L retention signal from the Golgi to the ER. Involved in low-level resistance to the oxyanions arsenite and arsenate, and in heat tolerance.</text>
</comment>
<comment type="subunit">
    <text evidence="1">Homodimer. Component of the Golgi to ER traffic (GET) complex, which is composed of GET1, GET2 and GET3. Within the complex, GET1 and GET2 form a heterotetramer which is stabilized by phosphatidylinositol binding and which binds to the GET3 homodimer. Interacts with the chloride channel protein GEF1.</text>
</comment>
<comment type="subcellular location">
    <subcellularLocation>
        <location evidence="1">Cytoplasm</location>
    </subcellularLocation>
    <subcellularLocation>
        <location evidence="1">Endoplasmic reticulum</location>
    </subcellularLocation>
    <subcellularLocation>
        <location evidence="1">Golgi apparatus</location>
    </subcellularLocation>
    <text evidence="1">GET1 and GET2 are required for targeting GET3 to the endoplasmic reticulum.</text>
</comment>
<comment type="similarity">
    <text evidence="1">Belongs to the arsA ATPase family.</text>
</comment>
<proteinExistence type="inferred from homology"/>
<accession>Q6C3M9</accession>
<organism>
    <name type="scientific">Yarrowia lipolytica (strain CLIB 122 / E 150)</name>
    <name type="common">Yeast</name>
    <name type="synonym">Candida lipolytica</name>
    <dbReference type="NCBI Taxonomy" id="284591"/>
    <lineage>
        <taxon>Eukaryota</taxon>
        <taxon>Fungi</taxon>
        <taxon>Dikarya</taxon>
        <taxon>Ascomycota</taxon>
        <taxon>Saccharomycotina</taxon>
        <taxon>Dipodascomycetes</taxon>
        <taxon>Dipodascales</taxon>
        <taxon>Dipodascales incertae sedis</taxon>
        <taxon>Yarrowia</taxon>
    </lineage>
</organism>
<keyword id="KW-0067">ATP-binding</keyword>
<keyword id="KW-0963">Cytoplasm</keyword>
<keyword id="KW-0256">Endoplasmic reticulum</keyword>
<keyword id="KW-0333">Golgi apparatus</keyword>
<keyword id="KW-0378">Hydrolase</keyword>
<keyword id="KW-0479">Metal-binding</keyword>
<keyword id="KW-0547">Nucleotide-binding</keyword>
<keyword id="KW-1185">Reference proteome</keyword>
<keyword id="KW-0813">Transport</keyword>
<keyword id="KW-0862">Zinc</keyword>